<sequence>MALNSEVMFREQINAMRSQAGRKRATSLQSFCSGNTDDSSADSTDNMDMMVDYPQQKGVSCMRARFNSESTLSKSFRKKVKKLAQKDRRSKERLNGNSEEDAIEVPRGAPSTYAAPSKLRKSKALDCLVSEKPKDEGRSEDSGHGADIEMAKGHFNDVRMKVFAARTAMQVEPALVMKTRKALEMKNAVLENHQSPGAFSLHAAYKIAASAESRVGSITPCNKKVTKEAMANLIRSSYDDTEITQELLFSSKFDSKWKGRYTDIYMRRDENGKKPKRPVNGQGWVMPLKSICEKFGINSTFFTNHRIDLKSARDQVLLMRLLSHDQTSTWISDIHPEAVKNETLAEYLLRELDASTMQKRVQAFKANVLADRDRVRVAGQFYNNIRIGKRMFGAARKAKYLSTIIGGMERRFEILENSVNHIPFTHSASDNNQEKCRNPRVHCRDSTRIALQFPRGQYLGDFIHANRISGKPLFNEFIMTQAPMKNTVDDFWRMVWQEEVPYIVMLTSRKEPERCEYYWPKSPSDPAVTVPGGLRIENFGVYQAPDPLFRVTHLRLIGPDREERHVEHWQGDVNNSSNMYSPLNILRLLRNASKPVVIHDHLGVSRAACLVAAEIAICSLLRGPTYKYPVQRAVQFLRQRRPFSIETPMQYIFVHRLVAFFFRDVIGSAKELDVDYERWLQERSERMFLDDLAAPIPGYRLLSPRADPDIVRMVGRPERPNYRREAPDCVGEMPNKVAAVDGILSPAKSVFEF</sequence>
<reference evidence="7" key="1">
    <citation type="journal article" date="1998" name="Science">
        <title>Genome sequence of the nematode C. elegans: a platform for investigating biology.</title>
        <authorList>
            <consortium name="The C. elegans sequencing consortium"/>
        </authorList>
    </citation>
    <scope>NUCLEOTIDE SEQUENCE [LARGE SCALE GENOMIC DNA]</scope>
    <source>
        <strain evidence="7">Bristol N2</strain>
    </source>
</reference>
<reference evidence="6" key="2">
    <citation type="journal article" date="2009" name="Cell">
        <title>Regulation of MBK-2/DYRK by CDK-1 and the pseudophosphatases EGG-4 and EGG-5 during the oocyte-to-embryo transition.</title>
        <authorList>
            <person name="Cheng K.C."/>
            <person name="Klancer R."/>
            <person name="Singson A."/>
            <person name="Seydoux G."/>
        </authorList>
    </citation>
    <scope>FUNCTION</scope>
    <scope>IDENTIFICATION IN A COMPLEX WITH MBK-2; EGG-3 AND EGG-4</scope>
    <scope>INTERACTION WITH MBK-2</scope>
    <scope>DISRUPTION PHENOTYPE</scope>
</reference>
<reference evidence="6" key="3">
    <citation type="journal article" date="2009" name="Curr. Biol.">
        <title>EGG-4 and EGG-5 Link Events of the Oocyte-to-Embryo Transition with Meiotic Progression in C. elegans.</title>
        <authorList>
            <person name="Parry J.M."/>
            <person name="Velarde N.V."/>
            <person name="Lefkovith A.J."/>
            <person name="Zegarek M.H."/>
            <person name="Hang J.S."/>
            <person name="Ohm J."/>
            <person name="Klancer R."/>
            <person name="Maruyama R."/>
            <person name="Druzhinina M.K."/>
            <person name="Grant B.D."/>
            <person name="Piano F."/>
            <person name="Singson A."/>
        </authorList>
    </citation>
    <scope>FUNCTION</scope>
    <scope>SUBCELLULAR LOCATION</scope>
    <scope>DISRUPTION PHENOTYPE</scope>
</reference>
<gene>
    <name evidence="8" type="primary">egg-5</name>
    <name evidence="8" type="ORF">R12E2.10</name>
</gene>
<dbReference type="EMBL" id="BX284601">
    <property type="protein sequence ID" value="CCD65177.1"/>
    <property type="molecule type" value="Genomic_DNA"/>
</dbReference>
<dbReference type="PIR" id="T33093">
    <property type="entry name" value="T33093"/>
</dbReference>
<dbReference type="RefSeq" id="NP_491316.1">
    <property type="nucleotide sequence ID" value="NM_058915.9"/>
</dbReference>
<dbReference type="SMR" id="O61789"/>
<dbReference type="ComplexPortal" id="CPX-3381">
    <property type="entry name" value="Egg-3/4/5 MBK-2 complex"/>
</dbReference>
<dbReference type="FunCoup" id="O61789">
    <property type="interactions" value="226"/>
</dbReference>
<dbReference type="IntAct" id="O61789">
    <property type="interactions" value="1"/>
</dbReference>
<dbReference type="STRING" id="6239.R12E2.10.1"/>
<dbReference type="PaxDb" id="6239-R12E2.10"/>
<dbReference type="PeptideAtlas" id="O61789"/>
<dbReference type="EnsemblMetazoa" id="R12E2.10.1">
    <property type="protein sequence ID" value="R12E2.10.1"/>
    <property type="gene ID" value="WBGene00020035"/>
</dbReference>
<dbReference type="GeneID" id="172007"/>
<dbReference type="KEGG" id="cel:CELE_R12E2.10"/>
<dbReference type="UCSC" id="R12E2.10">
    <property type="organism name" value="c. elegans"/>
</dbReference>
<dbReference type="AGR" id="WB:WBGene00020035"/>
<dbReference type="CTD" id="172007"/>
<dbReference type="WormBase" id="R12E2.10">
    <property type="protein sequence ID" value="CE18142"/>
    <property type="gene ID" value="WBGene00020035"/>
    <property type="gene designation" value="egg-5"/>
</dbReference>
<dbReference type="eggNOG" id="KOG0789">
    <property type="taxonomic scope" value="Eukaryota"/>
</dbReference>
<dbReference type="GeneTree" id="ENSGT00970000196671"/>
<dbReference type="HOGENOM" id="CLU_370166_0_0_1"/>
<dbReference type="InParanoid" id="O61789"/>
<dbReference type="OrthoDB" id="5867707at2759"/>
<dbReference type="PRO" id="PR:O61789"/>
<dbReference type="Proteomes" id="UP000001940">
    <property type="component" value="Chromosome I"/>
</dbReference>
<dbReference type="Bgee" id="WBGene00020035">
    <property type="expression patterns" value="Expressed in adult organism and 2 other cell types or tissues"/>
</dbReference>
<dbReference type="GO" id="GO:0005938">
    <property type="term" value="C:cell cortex"/>
    <property type="evidence" value="ECO:0000314"/>
    <property type="project" value="UniProtKB"/>
</dbReference>
<dbReference type="GO" id="GO:0005634">
    <property type="term" value="C:nucleus"/>
    <property type="evidence" value="ECO:0000314"/>
    <property type="project" value="WormBase"/>
</dbReference>
<dbReference type="GO" id="GO:0019901">
    <property type="term" value="F:protein kinase binding"/>
    <property type="evidence" value="ECO:0000353"/>
    <property type="project" value="WormBase"/>
</dbReference>
<dbReference type="GO" id="GO:0004725">
    <property type="term" value="F:protein tyrosine phosphatase activity"/>
    <property type="evidence" value="ECO:0000318"/>
    <property type="project" value="GO_Central"/>
</dbReference>
<dbReference type="GO" id="GO:0030866">
    <property type="term" value="P:cortical actin cytoskeleton organization"/>
    <property type="evidence" value="ECO:0000316"/>
    <property type="project" value="UniProtKB"/>
</dbReference>
<dbReference type="GO" id="GO:0030703">
    <property type="term" value="P:eggshell formation"/>
    <property type="evidence" value="ECO:0000316"/>
    <property type="project" value="UniProtKB"/>
</dbReference>
<dbReference type="GO" id="GO:0001556">
    <property type="term" value="P:oocyte maturation"/>
    <property type="evidence" value="ECO:0000303"/>
    <property type="project" value="ComplexPortal"/>
</dbReference>
<dbReference type="GO" id="GO:0040038">
    <property type="term" value="P:polar body extrusion after meiotic divisions"/>
    <property type="evidence" value="ECO:0000316"/>
    <property type="project" value="UniProtKB"/>
</dbReference>
<dbReference type="GO" id="GO:1904778">
    <property type="term" value="P:positive regulation of protein localization to cell cortex"/>
    <property type="evidence" value="ECO:0000316"/>
    <property type="project" value="UniProtKB"/>
</dbReference>
<dbReference type="GO" id="GO:0007165">
    <property type="term" value="P:signal transduction"/>
    <property type="evidence" value="ECO:0000318"/>
    <property type="project" value="GO_Central"/>
</dbReference>
<dbReference type="CDD" id="cd00047">
    <property type="entry name" value="PTPc"/>
    <property type="match status" value="1"/>
</dbReference>
<dbReference type="Gene3D" id="3.90.190.10">
    <property type="entry name" value="Protein tyrosine phosphatase superfamily"/>
    <property type="match status" value="1"/>
</dbReference>
<dbReference type="InterPro" id="IPR052782">
    <property type="entry name" value="Oocyte-zygote_transition_reg"/>
</dbReference>
<dbReference type="InterPro" id="IPR029021">
    <property type="entry name" value="Prot-tyrosine_phosphatase-like"/>
</dbReference>
<dbReference type="InterPro" id="IPR000242">
    <property type="entry name" value="PTP_cat"/>
</dbReference>
<dbReference type="InterPro" id="IPR003595">
    <property type="entry name" value="Tyr_Pase_cat"/>
</dbReference>
<dbReference type="InterPro" id="IPR000387">
    <property type="entry name" value="Tyr_Pase_dom"/>
</dbReference>
<dbReference type="PANTHER" id="PTHR46163:SF7">
    <property type="entry name" value="PROTEIN TYROSINE PHOSPHATASE-LIKE PROTEIN EGG-3"/>
    <property type="match status" value="1"/>
</dbReference>
<dbReference type="PANTHER" id="PTHR46163">
    <property type="entry name" value="TYROSINE-PROTEIN PHOSPHATASE-RELATED"/>
    <property type="match status" value="1"/>
</dbReference>
<dbReference type="Pfam" id="PF00102">
    <property type="entry name" value="Y_phosphatase"/>
    <property type="match status" value="1"/>
</dbReference>
<dbReference type="PRINTS" id="PR00700">
    <property type="entry name" value="PRTYPHPHTASE"/>
</dbReference>
<dbReference type="SMART" id="SM00194">
    <property type="entry name" value="PTPc"/>
    <property type="match status" value="1"/>
</dbReference>
<dbReference type="SMART" id="SM00404">
    <property type="entry name" value="PTPc_motif"/>
    <property type="match status" value="1"/>
</dbReference>
<dbReference type="SUPFAM" id="SSF52799">
    <property type="entry name" value="(Phosphotyrosine protein) phosphatases II"/>
    <property type="match status" value="1"/>
</dbReference>
<dbReference type="PROSITE" id="PS50056">
    <property type="entry name" value="TYR_PHOSPHATASE_2"/>
    <property type="match status" value="1"/>
</dbReference>
<dbReference type="PROSITE" id="PS50055">
    <property type="entry name" value="TYR_PHOSPHATASE_PTP"/>
    <property type="match status" value="1"/>
</dbReference>
<proteinExistence type="evidence at protein level"/>
<organism evidence="7">
    <name type="scientific">Caenorhabditis elegans</name>
    <dbReference type="NCBI Taxonomy" id="6239"/>
    <lineage>
        <taxon>Eukaryota</taxon>
        <taxon>Metazoa</taxon>
        <taxon>Ecdysozoa</taxon>
        <taxon>Nematoda</taxon>
        <taxon>Chromadorea</taxon>
        <taxon>Rhabditida</taxon>
        <taxon>Rhabditina</taxon>
        <taxon>Rhabditomorpha</taxon>
        <taxon>Rhabditoidea</taxon>
        <taxon>Rhabditidae</taxon>
        <taxon>Peloderinae</taxon>
        <taxon>Caenorhabditis</taxon>
    </lineage>
</organism>
<evidence type="ECO:0000255" key="1">
    <source>
        <dbReference type="PROSITE-ProRule" id="PRU00160"/>
    </source>
</evidence>
<evidence type="ECO:0000256" key="2">
    <source>
        <dbReference type="SAM" id="MobiDB-lite"/>
    </source>
</evidence>
<evidence type="ECO:0000269" key="3">
    <source>
    </source>
</evidence>
<evidence type="ECO:0000269" key="4">
    <source>
    </source>
</evidence>
<evidence type="ECO:0000303" key="5">
    <source>
    </source>
</evidence>
<evidence type="ECO:0000305" key="6"/>
<evidence type="ECO:0000312" key="7">
    <source>
        <dbReference type="Proteomes" id="UP000001940"/>
    </source>
</evidence>
<evidence type="ECO:0000312" key="8">
    <source>
        <dbReference type="WormBase" id="R12E2.10"/>
    </source>
</evidence>
<feature type="chain" id="PRO_0000443252" description="Inactive protein-tyrosine phosphatase egg-5">
    <location>
        <begin position="1"/>
        <end position="753"/>
    </location>
</feature>
<feature type="domain" description="Tyrosine-protein phosphatase" evidence="1">
    <location>
        <begin position="408"/>
        <end position="661"/>
    </location>
</feature>
<feature type="region of interest" description="Disordered" evidence="2">
    <location>
        <begin position="26"/>
        <end position="46"/>
    </location>
</feature>
<feature type="region of interest" description="Disordered" evidence="2">
    <location>
        <begin position="77"/>
        <end position="116"/>
    </location>
</feature>
<feature type="compositionally biased region" description="Low complexity" evidence="2">
    <location>
        <begin position="35"/>
        <end position="46"/>
    </location>
</feature>
<feature type="compositionally biased region" description="Basic and acidic residues" evidence="2">
    <location>
        <begin position="84"/>
        <end position="94"/>
    </location>
</feature>
<comment type="function">
    <text evidence="3 4">Inactive phosphatase which acts redundantly with egg-4 in the oocyte-to-zygote transition (PubMed:19879147, PubMed:19879842). Required for polarized cortical actin cytoskeleton rearrangement in the oocyte before and after fertilization (PubMed:19879147). Together with egg-4, required for the cortical localization of kinase mbk-2 in maturing oocyte until the end of meiosis I (PubMed:19879842). Also required for kinase mbk-2, pseudophosphatase egg-3 and chitin synthase chs-1 localization to cytoplasmic foci after fertilization (PubMed:19879147).</text>
</comment>
<comment type="subunit">
    <text evidence="4">Part of a complex, consisting of pseudophosphatases egg-3, egg-4, egg-5 and kinase mbk-2; this complex is required for the oocyte-to-zygote transition. Interacts (via tyrosine-protein phosphatase domain) with kinase mbk-2 (via 'Tyr-619' and 'Tyr-621'); mbk-2 tyrosine phosphorylation enhances the interaction.</text>
</comment>
<comment type="subcellular location">
    <subcellularLocation>
        <location evidence="3">Cytoplasm</location>
        <location evidence="3">Cell cortex</location>
    </subcellularLocation>
    <text evidence="3">Localizes to the cell cortex in developing oocytes and in newly fertilized embryos.</text>
</comment>
<comment type="disruption phenotype">
    <text evidence="3 4">Severe reduction in the number of hatched larvae (PubMed:19879147). Simultaneous RNAi-mediated knockdown of egg-5 results in no viable progeny and causes endomitosis in the uterus, generation of polyspermic embryos and defects in meiosis completion, polar body formation and eggshell chitin layer formation (PubMed:19879147). In addition, posterior formation of F-actin cap at the cortex oocyte and its polarized dispersal after fertilization are impaired (PubMed:19879147). Prevents mbk-2 localization to the unfertilized oocyte cortex without affecting egg-3 cortical localization (PubMed:19879147, PubMed:19879842). Prevents mbk-2, egg-3 and chs-1 re-localization to cytoplasmic foci at meiosis anaphase I (PubMed:19879147). Simultaneous RNAi-mediated knockdown of egg-5 and mel-26 causes premature phosphorylation of mei-1, a mbk-1 substrate, during oocyte maturation (PubMed:19879842).</text>
</comment>
<comment type="similarity">
    <text evidence="6">Belongs to the protein-tyrosine phosphatase family.</text>
</comment>
<comment type="caution">
    <text evidence="6">The active site Cys-600 is replaced by a Asp residue suggesting that egg-5 may lack catalytic activity. Despite the lack of catalytic activity, egg-5 may retain the capacity to bind to phosphorylated substrates.</text>
</comment>
<name>EGG5_CAEEL</name>
<keyword id="KW-0963">Cytoplasm</keyword>
<keyword id="KW-0217">Developmental protein</keyword>
<keyword id="KW-1185">Reference proteome</keyword>
<protein>
    <recommendedName>
        <fullName evidence="6">Inactive protein-tyrosine phosphatase egg-5</fullName>
    </recommendedName>
    <alternativeName>
        <fullName evidence="8">Egg sterile protein 5</fullName>
    </alternativeName>
    <alternativeName>
        <fullName evidence="5">Protein-tyrosine phosphatase-like protein egg-5</fullName>
    </alternativeName>
</protein>
<accession>O61789</accession>